<organism>
    <name type="scientific">Picrophilus torridus (strain ATCC 700027 / DSM 9790 / JCM 10055 / NBRC 100828 / KAW 2/3)</name>
    <dbReference type="NCBI Taxonomy" id="1122961"/>
    <lineage>
        <taxon>Archaea</taxon>
        <taxon>Methanobacteriati</taxon>
        <taxon>Thermoplasmatota</taxon>
        <taxon>Thermoplasmata</taxon>
        <taxon>Thermoplasmatales</taxon>
        <taxon>Picrophilaceae</taxon>
        <taxon>Picrophilus</taxon>
    </lineage>
</organism>
<evidence type="ECO:0000255" key="1">
    <source>
        <dbReference type="HAMAP-Rule" id="MF_01117"/>
    </source>
</evidence>
<name>CDPAS_PICTO</name>
<proteinExistence type="inferred from homology"/>
<sequence length="184" mass="20277">MVNIIMVLYSIFLFLPAFIANPGAVITGGHFILDRGKTIHGKRILGDGKSLSGFIGGSLIGVLAGIIVYYIIYISNIGLGNYGNNIISALPVLFAMSFGSLTGDITGSFIKRRLGMKRGAKGSLLDQWPFVLMSFLFIFIFARHFFLEFYGNFIAIILILVLTPPLHRGVNILGYKLKMKDVPW</sequence>
<comment type="function">
    <text evidence="1">Catalyzes the formation of CDP-2,3-bis-(O-geranylgeranyl)-sn-glycerol (CDP-archaeol) from 2,3-bis-(O-geranylgeranyl)-sn-glycerol 1-phosphate (DGGGP) and CTP. This reaction is the third ether-bond-formation step in the biosynthesis of archaeal membrane lipids.</text>
</comment>
<comment type="catalytic activity">
    <reaction evidence="1">
        <text>2,3-bis-O-(geranylgeranyl)-sn-glycerol 1-phosphate + CTP + H(+) = CDP-2,3-bis-O-(geranylgeranyl)-sn-glycerol + diphosphate</text>
        <dbReference type="Rhea" id="RHEA:25690"/>
        <dbReference type="ChEBI" id="CHEBI:15378"/>
        <dbReference type="ChEBI" id="CHEBI:33019"/>
        <dbReference type="ChEBI" id="CHEBI:37563"/>
        <dbReference type="ChEBI" id="CHEBI:58837"/>
        <dbReference type="ChEBI" id="CHEBI:58838"/>
        <dbReference type="EC" id="2.7.7.67"/>
    </reaction>
</comment>
<comment type="cofactor">
    <cofactor evidence="1">
        <name>Mg(2+)</name>
        <dbReference type="ChEBI" id="CHEBI:18420"/>
    </cofactor>
</comment>
<comment type="pathway">
    <text evidence="1">Membrane lipid metabolism; glycerophospholipid metabolism.</text>
</comment>
<comment type="subcellular location">
    <subcellularLocation>
        <location evidence="1">Cell membrane</location>
        <topology evidence="1">Multi-pass membrane protein</topology>
    </subcellularLocation>
</comment>
<comment type="similarity">
    <text evidence="1">Belongs to the CDP-archaeol synthase family.</text>
</comment>
<accession>Q6L013</accession>
<keyword id="KW-1003">Cell membrane</keyword>
<keyword id="KW-0444">Lipid biosynthesis</keyword>
<keyword id="KW-0443">Lipid metabolism</keyword>
<keyword id="KW-0460">Magnesium</keyword>
<keyword id="KW-0472">Membrane</keyword>
<keyword id="KW-0594">Phospholipid biosynthesis</keyword>
<keyword id="KW-1208">Phospholipid metabolism</keyword>
<keyword id="KW-0808">Transferase</keyword>
<keyword id="KW-0812">Transmembrane</keyword>
<keyword id="KW-1133">Transmembrane helix</keyword>
<gene>
    <name evidence="1" type="primary">carS</name>
    <name type="ordered locus">PTO1104</name>
</gene>
<feature type="chain" id="PRO_0000298284" description="CDP-archaeol synthase">
    <location>
        <begin position="1"/>
        <end position="184"/>
    </location>
</feature>
<feature type="transmembrane region" description="Helical" evidence="1">
    <location>
        <begin position="4"/>
        <end position="24"/>
    </location>
</feature>
<feature type="transmembrane region" description="Helical" evidence="1">
    <location>
        <begin position="54"/>
        <end position="74"/>
    </location>
</feature>
<feature type="transmembrane region" description="Helical" evidence="1">
    <location>
        <begin position="86"/>
        <end position="106"/>
    </location>
</feature>
<feature type="transmembrane region" description="Helical" evidence="1">
    <location>
        <begin position="122"/>
        <end position="142"/>
    </location>
</feature>
<feature type="transmembrane region" description="Helical" evidence="1">
    <location>
        <begin position="145"/>
        <end position="165"/>
    </location>
</feature>
<reference key="1">
    <citation type="journal article" date="2004" name="Proc. Natl. Acad. Sci. U.S.A.">
        <title>Genome sequence of Picrophilus torridus and its implications for life around pH 0.</title>
        <authorList>
            <person name="Fuetterer O."/>
            <person name="Angelov A."/>
            <person name="Liesegang H."/>
            <person name="Gottschalk G."/>
            <person name="Schleper C."/>
            <person name="Schepers B."/>
            <person name="Dock C."/>
            <person name="Antranikian G."/>
            <person name="Liebl W."/>
        </authorList>
    </citation>
    <scope>NUCLEOTIDE SEQUENCE [LARGE SCALE GENOMIC DNA]</scope>
    <source>
        <strain>ATCC 700027 / DSM 9790 / JCM 10055 / NBRC 100828 / KAW 2/3</strain>
    </source>
</reference>
<protein>
    <recommendedName>
        <fullName evidence="1">CDP-archaeol synthase</fullName>
        <ecNumber evidence="1">2.7.7.67</ecNumber>
    </recommendedName>
    <alternativeName>
        <fullName evidence="1">CDP-2,3-bis-(O-geranylgeranyl)-sn-glycerol synthase</fullName>
    </alternativeName>
</protein>
<dbReference type="EC" id="2.7.7.67" evidence="1"/>
<dbReference type="EMBL" id="AE017261">
    <property type="protein sequence ID" value="AAT43689.1"/>
    <property type="molecule type" value="Genomic_DNA"/>
</dbReference>
<dbReference type="RefSeq" id="WP_011177905.1">
    <property type="nucleotide sequence ID" value="NC_005877.1"/>
</dbReference>
<dbReference type="SMR" id="Q6L013"/>
<dbReference type="STRING" id="263820.PTO1104"/>
<dbReference type="PaxDb" id="263820-PTO1104"/>
<dbReference type="GeneID" id="2845112"/>
<dbReference type="KEGG" id="pto:PTO1104"/>
<dbReference type="eggNOG" id="arCOG04106">
    <property type="taxonomic scope" value="Archaea"/>
</dbReference>
<dbReference type="HOGENOM" id="CLU_105710_0_0_2"/>
<dbReference type="InParanoid" id="Q6L013"/>
<dbReference type="OrthoDB" id="45383at2157"/>
<dbReference type="UniPathway" id="UPA00940"/>
<dbReference type="Proteomes" id="UP000000438">
    <property type="component" value="Chromosome"/>
</dbReference>
<dbReference type="GO" id="GO:0005886">
    <property type="term" value="C:plasma membrane"/>
    <property type="evidence" value="ECO:0007669"/>
    <property type="project" value="UniProtKB-SubCell"/>
</dbReference>
<dbReference type="GO" id="GO:0043338">
    <property type="term" value="F:CDP-2,3-bis-(O-geranylgeranyl)-sn-glycerol synthase activity"/>
    <property type="evidence" value="ECO:0007669"/>
    <property type="project" value="UniProtKB-EC"/>
</dbReference>
<dbReference type="GO" id="GO:0046474">
    <property type="term" value="P:glycerophospholipid biosynthetic process"/>
    <property type="evidence" value="ECO:0007669"/>
    <property type="project" value="UniProtKB-UniRule"/>
</dbReference>
<dbReference type="HAMAP" id="MF_01117">
    <property type="entry name" value="CDP_archaeol_synth"/>
    <property type="match status" value="1"/>
</dbReference>
<dbReference type="InterPro" id="IPR032690">
    <property type="entry name" value="CarS"/>
</dbReference>
<dbReference type="InterPro" id="IPR002726">
    <property type="entry name" value="CarS_archaea"/>
</dbReference>
<dbReference type="NCBIfam" id="NF003114">
    <property type="entry name" value="PRK04032.1"/>
    <property type="match status" value="1"/>
</dbReference>
<dbReference type="PANTHER" id="PTHR39650">
    <property type="entry name" value="CDP-ARCHAEOL SYNTHASE"/>
    <property type="match status" value="1"/>
</dbReference>
<dbReference type="PANTHER" id="PTHR39650:SF1">
    <property type="entry name" value="CDP-ARCHAEOL SYNTHASE"/>
    <property type="match status" value="1"/>
</dbReference>
<dbReference type="Pfam" id="PF01864">
    <property type="entry name" value="CarS-like"/>
    <property type="match status" value="1"/>
</dbReference>